<gene>
    <name evidence="1" type="primary">tsf</name>
    <name type="ordered locus">Arth_1368</name>
</gene>
<protein>
    <recommendedName>
        <fullName evidence="1">Elongation factor Ts</fullName>
        <shortName evidence="1">EF-Ts</shortName>
    </recommendedName>
</protein>
<proteinExistence type="inferred from homology"/>
<organism>
    <name type="scientific">Arthrobacter sp. (strain FB24)</name>
    <dbReference type="NCBI Taxonomy" id="290399"/>
    <lineage>
        <taxon>Bacteria</taxon>
        <taxon>Bacillati</taxon>
        <taxon>Actinomycetota</taxon>
        <taxon>Actinomycetes</taxon>
        <taxon>Micrococcales</taxon>
        <taxon>Micrococcaceae</taxon>
        <taxon>Arthrobacter</taxon>
    </lineage>
</organism>
<accession>A0JUP2</accession>
<sequence length="278" mass="29180">MANYTAADIKALRERTGAGMMDVKKALDEANGDAEKAIEIIRIKGLKGATKREGRSTAEGLVAAKVAGGVGVMIEVNCETDFVAKADKFIQLADKVLAVAVESGAADIETLLATEVDGKPLSEVVVEEGAILGEKVVVRRISRLEGGTVDAYLHKTSKDLPAQVGVLFAVDGEGEAAATAAHDVAVHIAAMAPNYLTREDVPADLVESERRIAEETAKAEGKPEAAMTKIVEGRVTGFYKGEVLVDQAFAKDAKKSVAQVLEEAGVKGTAFARFRVGS</sequence>
<dbReference type="EMBL" id="CP000454">
    <property type="protein sequence ID" value="ABK02762.1"/>
    <property type="molecule type" value="Genomic_DNA"/>
</dbReference>
<dbReference type="RefSeq" id="WP_011691229.1">
    <property type="nucleotide sequence ID" value="NC_008541.1"/>
</dbReference>
<dbReference type="SMR" id="A0JUP2"/>
<dbReference type="STRING" id="290399.Arth_1368"/>
<dbReference type="KEGG" id="art:Arth_1368"/>
<dbReference type="eggNOG" id="COG0264">
    <property type="taxonomic scope" value="Bacteria"/>
</dbReference>
<dbReference type="HOGENOM" id="CLU_047155_0_0_11"/>
<dbReference type="OrthoDB" id="9808348at2"/>
<dbReference type="Proteomes" id="UP000000754">
    <property type="component" value="Chromosome"/>
</dbReference>
<dbReference type="GO" id="GO:0005737">
    <property type="term" value="C:cytoplasm"/>
    <property type="evidence" value="ECO:0007669"/>
    <property type="project" value="UniProtKB-SubCell"/>
</dbReference>
<dbReference type="GO" id="GO:0003746">
    <property type="term" value="F:translation elongation factor activity"/>
    <property type="evidence" value="ECO:0007669"/>
    <property type="project" value="UniProtKB-UniRule"/>
</dbReference>
<dbReference type="CDD" id="cd14275">
    <property type="entry name" value="UBA_EF-Ts"/>
    <property type="match status" value="1"/>
</dbReference>
<dbReference type="FunFam" id="1.10.286.20:FF:000001">
    <property type="entry name" value="Elongation factor Ts"/>
    <property type="match status" value="1"/>
</dbReference>
<dbReference type="FunFam" id="1.10.8.10:FF:000001">
    <property type="entry name" value="Elongation factor Ts"/>
    <property type="match status" value="1"/>
</dbReference>
<dbReference type="Gene3D" id="1.10.286.20">
    <property type="match status" value="1"/>
</dbReference>
<dbReference type="Gene3D" id="1.10.8.10">
    <property type="entry name" value="DNA helicase RuvA subunit, C-terminal domain"/>
    <property type="match status" value="1"/>
</dbReference>
<dbReference type="Gene3D" id="3.30.479.20">
    <property type="entry name" value="Elongation factor Ts, dimerisation domain"/>
    <property type="match status" value="2"/>
</dbReference>
<dbReference type="HAMAP" id="MF_00050">
    <property type="entry name" value="EF_Ts"/>
    <property type="match status" value="1"/>
</dbReference>
<dbReference type="InterPro" id="IPR036402">
    <property type="entry name" value="EF-Ts_dimer_sf"/>
</dbReference>
<dbReference type="InterPro" id="IPR001816">
    <property type="entry name" value="Transl_elong_EFTs/EF1B"/>
</dbReference>
<dbReference type="InterPro" id="IPR014039">
    <property type="entry name" value="Transl_elong_EFTs/EF1B_dimer"/>
</dbReference>
<dbReference type="InterPro" id="IPR018101">
    <property type="entry name" value="Transl_elong_Ts_CS"/>
</dbReference>
<dbReference type="InterPro" id="IPR009060">
    <property type="entry name" value="UBA-like_sf"/>
</dbReference>
<dbReference type="NCBIfam" id="TIGR00116">
    <property type="entry name" value="tsf"/>
    <property type="match status" value="1"/>
</dbReference>
<dbReference type="PANTHER" id="PTHR11741">
    <property type="entry name" value="ELONGATION FACTOR TS"/>
    <property type="match status" value="1"/>
</dbReference>
<dbReference type="PANTHER" id="PTHR11741:SF0">
    <property type="entry name" value="ELONGATION FACTOR TS, MITOCHONDRIAL"/>
    <property type="match status" value="1"/>
</dbReference>
<dbReference type="Pfam" id="PF00889">
    <property type="entry name" value="EF_TS"/>
    <property type="match status" value="1"/>
</dbReference>
<dbReference type="SUPFAM" id="SSF54713">
    <property type="entry name" value="Elongation factor Ts (EF-Ts), dimerisation domain"/>
    <property type="match status" value="1"/>
</dbReference>
<dbReference type="SUPFAM" id="SSF46934">
    <property type="entry name" value="UBA-like"/>
    <property type="match status" value="1"/>
</dbReference>
<dbReference type="PROSITE" id="PS01126">
    <property type="entry name" value="EF_TS_1"/>
    <property type="match status" value="1"/>
</dbReference>
<dbReference type="PROSITE" id="PS01127">
    <property type="entry name" value="EF_TS_2"/>
    <property type="match status" value="1"/>
</dbReference>
<name>EFTS_ARTS2</name>
<feature type="chain" id="PRO_1000006052" description="Elongation factor Ts">
    <location>
        <begin position="1"/>
        <end position="278"/>
    </location>
</feature>
<feature type="region of interest" description="Involved in Mg(2+) ion dislocation from EF-Tu" evidence="1">
    <location>
        <begin position="80"/>
        <end position="83"/>
    </location>
</feature>
<reference key="1">
    <citation type="journal article" date="2013" name="Stand. Genomic Sci.">
        <title>Complete genome sequence of Arthrobacter sp. strain FB24.</title>
        <authorList>
            <person name="Nakatsu C.H."/>
            <person name="Barabote R."/>
            <person name="Thompson S."/>
            <person name="Bruce D."/>
            <person name="Detter C."/>
            <person name="Brettin T."/>
            <person name="Han C."/>
            <person name="Beasley F."/>
            <person name="Chen W."/>
            <person name="Konopka A."/>
            <person name="Xie G."/>
        </authorList>
    </citation>
    <scope>NUCLEOTIDE SEQUENCE [LARGE SCALE GENOMIC DNA]</scope>
    <source>
        <strain>FB24</strain>
    </source>
</reference>
<comment type="function">
    <text evidence="1">Associates with the EF-Tu.GDP complex and induces the exchange of GDP to GTP. It remains bound to the aminoacyl-tRNA.EF-Tu.GTP complex up to the GTP hydrolysis stage on the ribosome.</text>
</comment>
<comment type="subcellular location">
    <subcellularLocation>
        <location evidence="1">Cytoplasm</location>
    </subcellularLocation>
</comment>
<comment type="similarity">
    <text evidence="1">Belongs to the EF-Ts family.</text>
</comment>
<evidence type="ECO:0000255" key="1">
    <source>
        <dbReference type="HAMAP-Rule" id="MF_00050"/>
    </source>
</evidence>
<keyword id="KW-0963">Cytoplasm</keyword>
<keyword id="KW-0251">Elongation factor</keyword>
<keyword id="KW-0648">Protein biosynthesis</keyword>
<keyword id="KW-1185">Reference proteome</keyword>